<gene>
    <name type="primary">SMARCD1</name>
    <name type="synonym">BAF60A</name>
</gene>
<keyword id="KW-0007">Acetylation</keyword>
<keyword id="KW-0156">Chromatin regulator</keyword>
<keyword id="KW-0175">Coiled coil</keyword>
<keyword id="KW-1017">Isopeptide bond</keyword>
<keyword id="KW-0488">Methylation</keyword>
<keyword id="KW-0524">Neurogenesis</keyword>
<keyword id="KW-0539">Nucleus</keyword>
<keyword id="KW-0597">Phosphoprotein</keyword>
<keyword id="KW-1185">Reference proteome</keyword>
<keyword id="KW-0832">Ubl conjugation</keyword>
<dbReference type="EMBL" id="BC109890">
    <property type="protein sequence ID" value="AAI09891.1"/>
    <property type="molecule type" value="mRNA"/>
</dbReference>
<dbReference type="RefSeq" id="NP_001033648.1">
    <property type="nucleotide sequence ID" value="NM_001038559.2"/>
</dbReference>
<dbReference type="SMR" id="Q2TBN1"/>
<dbReference type="FunCoup" id="Q2TBN1">
    <property type="interactions" value="1027"/>
</dbReference>
<dbReference type="STRING" id="9913.ENSBTAP00000001284"/>
<dbReference type="PaxDb" id="9913-ENSBTAP00000001284"/>
<dbReference type="GeneID" id="533232"/>
<dbReference type="KEGG" id="bta:533232"/>
<dbReference type="CTD" id="6602"/>
<dbReference type="eggNOG" id="KOG2570">
    <property type="taxonomic scope" value="Eukaryota"/>
</dbReference>
<dbReference type="InParanoid" id="Q2TBN1"/>
<dbReference type="OrthoDB" id="10263741at2759"/>
<dbReference type="Proteomes" id="UP000009136">
    <property type="component" value="Unplaced"/>
</dbReference>
<dbReference type="GO" id="GO:0071565">
    <property type="term" value="C:nBAF complex"/>
    <property type="evidence" value="ECO:0000250"/>
    <property type="project" value="UniProtKB"/>
</dbReference>
<dbReference type="GO" id="GO:0071564">
    <property type="term" value="C:npBAF complex"/>
    <property type="evidence" value="ECO:0000250"/>
    <property type="project" value="UniProtKB"/>
</dbReference>
<dbReference type="GO" id="GO:0005654">
    <property type="term" value="C:nucleoplasm"/>
    <property type="evidence" value="ECO:0007669"/>
    <property type="project" value="UniProtKB-ARBA"/>
</dbReference>
<dbReference type="GO" id="GO:0005634">
    <property type="term" value="C:nucleus"/>
    <property type="evidence" value="ECO:0000318"/>
    <property type="project" value="GO_Central"/>
</dbReference>
<dbReference type="GO" id="GO:0016514">
    <property type="term" value="C:SWI/SNF complex"/>
    <property type="evidence" value="ECO:0000318"/>
    <property type="project" value="GO_Central"/>
</dbReference>
<dbReference type="GO" id="GO:0003712">
    <property type="term" value="F:transcription coregulator activity"/>
    <property type="evidence" value="ECO:0000318"/>
    <property type="project" value="GO_Central"/>
</dbReference>
<dbReference type="GO" id="GO:0006325">
    <property type="term" value="P:chromatin organization"/>
    <property type="evidence" value="ECO:0007669"/>
    <property type="project" value="UniProtKB-KW"/>
</dbReference>
<dbReference type="GO" id="GO:0007399">
    <property type="term" value="P:nervous system development"/>
    <property type="evidence" value="ECO:0007669"/>
    <property type="project" value="UniProtKB-KW"/>
</dbReference>
<dbReference type="GO" id="GO:0006357">
    <property type="term" value="P:regulation of transcription by RNA polymerase II"/>
    <property type="evidence" value="ECO:0000318"/>
    <property type="project" value="GO_Central"/>
</dbReference>
<dbReference type="CDD" id="cd17674">
    <property type="entry name" value="SWIB_BAF60A"/>
    <property type="match status" value="1"/>
</dbReference>
<dbReference type="FunFam" id="1.10.245.10:FF:000001">
    <property type="entry name" value="SWI/SNF-related matrix-associated regulator of chromatin subfamily D member 3 isoform 1"/>
    <property type="match status" value="1"/>
</dbReference>
<dbReference type="Gene3D" id="1.10.245.10">
    <property type="entry name" value="SWIB/MDM2 domain"/>
    <property type="match status" value="1"/>
</dbReference>
<dbReference type="InterPro" id="IPR038041">
    <property type="entry name" value="SMARCD1_SWIB_dom"/>
</dbReference>
<dbReference type="InterPro" id="IPR019835">
    <property type="entry name" value="SWIB_domain"/>
</dbReference>
<dbReference type="InterPro" id="IPR036885">
    <property type="entry name" value="SWIB_MDM2_dom_sf"/>
</dbReference>
<dbReference type="InterPro" id="IPR003121">
    <property type="entry name" value="SWIB_MDM2_domain"/>
</dbReference>
<dbReference type="PANTHER" id="PTHR13844">
    <property type="entry name" value="SWI/SNF-RELATED MATRIX-ASSOCIATED ACTIN-DEPENDENT REGULATOR OF CHROMATIN SUBFAMILY D"/>
    <property type="match status" value="1"/>
</dbReference>
<dbReference type="Pfam" id="PF02201">
    <property type="entry name" value="SWIB"/>
    <property type="match status" value="1"/>
</dbReference>
<dbReference type="SMART" id="SM00151">
    <property type="entry name" value="SWIB"/>
    <property type="match status" value="1"/>
</dbReference>
<dbReference type="SUPFAM" id="SSF47592">
    <property type="entry name" value="SWIB/MDM2 domain"/>
    <property type="match status" value="1"/>
</dbReference>
<dbReference type="PROSITE" id="PS51925">
    <property type="entry name" value="SWIB_MDM2"/>
    <property type="match status" value="1"/>
</dbReference>
<accession>Q2TBN1</accession>
<comment type="function">
    <text evidence="2 4">Involved in transcriptional activation and repression of select genes by chromatin remodeling (alteration of DNA-nucleosome topology). Component of SWI/SNF chromatin remodeling complexes that carry out key enzymatic activities, changing chromatin structure by altering DNA-histone contacts within a nucleosome in an ATP-dependent manner (By similarity). Belongs to the neural progenitors-specific chromatin remodeling complex (npBAF complex) and the neuron-specific chromatin remodeling complex (nBAF complex). During neural development a switch from a stem/progenitor to a postmitotic chromatin remodeling mechanism occurs as neurons exit the cell cycle and become committed to their adult state. The transition from proliferating neural stem/progenitor cells to postmitotic neurons requires a switch in subunit composition of the npBAF and nBAF complexes. As neural progenitors exit mitosis and differentiate into neurons, npBAF complexes which contain ACTL6A/BAF53A and PHF10/BAF45A, are exchanged for homologous alternative ACTL6B/BAF53B and DPF1/BAF45B or DPF3/BAF45C subunits in neuron-specific complexes (nBAF). The npBAF complex is essential for the self-renewal/proliferative capacity of the multipotent neural stem cells. The nBAF complex along with CREST plays a role regulating the activity of genes essential for dendrite growth (By similarity). Has a strong influence on vitamin D-mediated transcriptional activity from an enhancer vitamin D receptor element (VDRE). May be a link between mammalian SWI-SNF-like chromatin remodeling complexes and the vitamin D receptor (VDR) heterodimer. Mediates critical interactions between nuclear receptors and the BRG1/SMARCA4 chromatin-remodeling complex for transactivation (By similarity). Interacts with AKIRIN2 (By similarity).</text>
</comment>
<comment type="subunit">
    <text evidence="2 4">Component of the multiprotein chromatin-remodeling complexes SWI/SNF: SWI/SNF-A (BAF), SWI/SNF-B (PBAF) and related complexes. The canonical complex contains a catalytic subunit (either SMARCA4/BRG1/BAF190A or SMARCA2/BRM/BAF190B), and at least SMARCE1, ACTL6A/BAF53, SMARCC1/BAF155, SMARCC2/BAF170, and SMARCB1/SNF5/BAF47. Other subunits specific to each of the complexes may also be present permitting several possible combinations developmentally and tissue specific. Component of the BAF complex, which includes at least actin (ACTB), ARID1A/BAF250A, ARID1B/BAF250B, SMARCA2/BRM, SMARCA4/BRG1/BAF190A, ACTL6A/BAF53, ACTL6B/BAF53B, SMARCE1/BAF57, SMARCC1/BAF155, SMARCC2/BAF170, SMARCB1/SNF5/INI1, and one or more SMARCD1/BAF60A, SMARCD2/BAF60B, or SMARCD3/BAF60C (By similarity). In muscle cells, the BAF complex also contains DPF3. Component of neural progenitors-specific chromatin remodeling complex (npBAF complex) composed of at least, ARID1A/BAF250A or ARID1B/BAF250B, SMARCD1/BAF60A, SMARCD3/BAF60C, SMARCA2/BRM/BAF190B, SMARCA4/BRG1/BAF190A, SMARCB1/BAF47, SMARCC1/BAF155, SMARCE1/BAF57, SMARCC2/BAF170, PHF10/BAF45A, ACTL6A/BAF53A and actin. Component of neuron-specific chromatin remodeling complex (nBAF complex) composed of at least, ARID1A/BAF250A or ARID1B/BAF250B, SMARCD1/BAF60A, SMARCD3/BAF60C, SMARCA2/BRM/BAF190B, SMARCA4/BRG1/BAF190A, SMARCB1/BAF47, SMARCC1/BAF155, SMARCE1/BAF57, SMARCC2/BAF170, DPF1/BAF45B, DPF3/BAF45C, ACTL6B/BAF53B and actin (By similarity). Component of the SWI/SNF-B (PBAF) chromatin remodeling complex, at least composed of SMARCA4/BRG1, SMARCB1/BAF47/SNF5, ACTL6A/BAF53A or ACTL6B/BAF53B, SMARCE1/BAF57, SMARCD1/BAF60A, SMARCD2/BAF60B, perhaps SMARCD3/BAF60C, SMARCC1/BAF155, SMARCC2/BAF170, PBRM1/BAF180, ARID2/BAF200 and actin (ACTB). Component of SWI/SNF (GBAF) subcomplex, which includes at least BICRA or BICRAL (mutually exclusive), BRD9, SS18, SMARCA2/BRM, SMARCA4/BRG1/BAF190A, ACTL6A/BAF53, SMARCC1/BAF155, and SMARCD1/BAF60A. Specifically interacts with the VDR heterodimer complex. Interacts with ESR1, NR3C1, NR1H4, PGR, SMARCA4, SMARCC1 and SMARCC2 (By similarity). Interacts with DPF2. Interacts with FOS, FOSB, FOSL1 and FOSL2 (By similarity).</text>
</comment>
<comment type="subcellular location">
    <subcellularLocation>
        <location evidence="8">Nucleus</location>
    </subcellularLocation>
</comment>
<comment type="similarity">
    <text evidence="8">Belongs to the SMARCD family.</text>
</comment>
<organism>
    <name type="scientific">Bos taurus</name>
    <name type="common">Bovine</name>
    <dbReference type="NCBI Taxonomy" id="9913"/>
    <lineage>
        <taxon>Eukaryota</taxon>
        <taxon>Metazoa</taxon>
        <taxon>Chordata</taxon>
        <taxon>Craniata</taxon>
        <taxon>Vertebrata</taxon>
        <taxon>Euteleostomi</taxon>
        <taxon>Mammalia</taxon>
        <taxon>Eutheria</taxon>
        <taxon>Laurasiatheria</taxon>
        <taxon>Artiodactyla</taxon>
        <taxon>Ruminantia</taxon>
        <taxon>Pecora</taxon>
        <taxon>Bovidae</taxon>
        <taxon>Bovinae</taxon>
        <taxon>Bos</taxon>
    </lineage>
</organism>
<name>SMRD1_BOVIN</name>
<proteinExistence type="evidence at transcript level"/>
<evidence type="ECO:0000250" key="1"/>
<evidence type="ECO:0000250" key="2">
    <source>
        <dbReference type="UniProtKB" id="Q61466"/>
    </source>
</evidence>
<evidence type="ECO:0000250" key="3">
    <source>
        <dbReference type="UniProtKB" id="Q92925"/>
    </source>
</evidence>
<evidence type="ECO:0000250" key="4">
    <source>
        <dbReference type="UniProtKB" id="Q96GM5"/>
    </source>
</evidence>
<evidence type="ECO:0000255" key="5"/>
<evidence type="ECO:0000255" key="6">
    <source>
        <dbReference type="PROSITE-ProRule" id="PRU01273"/>
    </source>
</evidence>
<evidence type="ECO:0000256" key="7">
    <source>
        <dbReference type="SAM" id="MobiDB-lite"/>
    </source>
</evidence>
<evidence type="ECO:0000305" key="8"/>
<reference key="1">
    <citation type="submission" date="2005-11" db="EMBL/GenBank/DDBJ databases">
        <authorList>
            <consortium name="NIH - Mammalian Gene Collection (MGC) project"/>
        </authorList>
    </citation>
    <scope>NUCLEOTIDE SEQUENCE [LARGE SCALE MRNA]</scope>
    <source>
        <strain>Crossbred X Angus</strain>
        <tissue>Liver</tissue>
    </source>
</reference>
<sequence>MAARAGFQSVAPSGGAGASGGAGAAAALGPGGTPGPPVRMGPAPGQGLYRSPMPGAAYPRPGMLPGSRMTPQGPSMGPPGYGGNPSVRPGLAQSGMDQSLKRPAPQQIKQVQQQAVQNRNHNAKKKKMADKILPQRIRELVPESQDYMDLLAFERKLDQTIMRKRLDIQEALKRPIKQKRKLRIFISNTFNPAKSDAEDGEGTVASWELRVEGRLLEDSALSKYDATKQKRKFSSFFKSLVIELDKDLYGPDNHLVEWHRTATTQETDGFQVKRPGDVNVRCTVLLMLDYQPPQFKLDPRLARLLGIHTQTRPVIIQALWQYIKTHKLQDPHEREFVICDKYLQQIFESQRMKFSEIPQRLHALLMPPEPIIINHVISVDPNDQKKTACYDIDEEVDDTLKTQMNSFLLSTASQQEIATLDNKIHETIETINQLKTQREFMLSFARDPQGFINDWLQSQCRDLKVMTDVVGNSEEERRAEFYFQPWAQEAVCRYFYSKVQQRRQELEQALGIRNT</sequence>
<feature type="chain" id="PRO_0000375224" description="SWI/SNF-related matrix-associated actin-dependent regulator of chromatin subfamily D member 1">
    <location>
        <begin position="1"/>
        <end position="515"/>
    </location>
</feature>
<feature type="domain" description="SWIB/MDM2" evidence="6">
    <location>
        <begin position="290"/>
        <end position="367"/>
    </location>
</feature>
<feature type="region of interest" description="Disordered" evidence="7">
    <location>
        <begin position="1"/>
        <end position="128"/>
    </location>
</feature>
<feature type="region of interest" description="Interaction with ESR1, NR1H4, NR3C1, PGR and SMARCA4" evidence="1">
    <location>
        <begin position="43"/>
        <end position="167"/>
    </location>
</feature>
<feature type="region of interest" description="Interaction with SMARCC1 and SMARCC2" evidence="1">
    <location>
        <begin position="168"/>
        <end position="474"/>
    </location>
</feature>
<feature type="region of interest" description="Necessary for GR/NR3C1-mediated remodeling and transcription from chromatin; required for GR/NR3C1 interaction with the BRG1/SMARCA4 complex in vivo" evidence="1">
    <location>
        <begin position="180"/>
        <end position="515"/>
    </location>
</feature>
<feature type="coiled-coil region" evidence="5">
    <location>
        <begin position="412"/>
        <end position="440"/>
    </location>
</feature>
<feature type="compositionally biased region" description="Gly residues" evidence="7">
    <location>
        <begin position="14"/>
        <end position="23"/>
    </location>
</feature>
<feature type="compositionally biased region" description="Low complexity" evidence="7">
    <location>
        <begin position="103"/>
        <end position="117"/>
    </location>
</feature>
<feature type="modified residue" description="Asymmetric dimethylarginine" evidence="3">
    <location>
        <position position="68"/>
    </location>
</feature>
<feature type="modified residue" description="Asymmetric dimethylarginine" evidence="2">
    <location>
        <position position="88"/>
    </location>
</feature>
<feature type="modified residue" description="Phosphothreonine" evidence="3">
    <location>
        <position position="203"/>
    </location>
</feature>
<feature type="modified residue" description="N6-acetyllysine" evidence="2">
    <location>
        <position position="223"/>
    </location>
</feature>
<feature type="cross-link" description="Glycyl lysine isopeptide (Lys-Gly) (interchain with G-Cter in SUMO2)" evidence="4">
    <location>
        <position position="101"/>
    </location>
</feature>
<protein>
    <recommendedName>
        <fullName>SWI/SNF-related matrix-associated actin-dependent regulator of chromatin subfamily D member 1</fullName>
    </recommendedName>
    <alternativeName>
        <fullName>60 kDa BRG-1/Brm-associated factor subunit A</fullName>
    </alternativeName>
    <alternativeName>
        <fullName>BRG1-associated factor 60A</fullName>
        <shortName>BAF60A</shortName>
    </alternativeName>
    <alternativeName>
        <fullName>SWI/SNF complex 60 kDa subunit</fullName>
    </alternativeName>
</protein>